<dbReference type="EC" id="1.14.-.-"/>
<dbReference type="EMBL" id="LT708304">
    <property type="protein sequence ID" value="SIT98575.1"/>
    <property type="molecule type" value="Genomic_DNA"/>
</dbReference>
<dbReference type="RefSeq" id="NP_853807.1">
    <property type="nucleotide sequence ID" value="NC_002945.3"/>
</dbReference>
<dbReference type="RefSeq" id="WP_003400938.1">
    <property type="nucleotide sequence ID" value="NC_002945.4"/>
</dbReference>
<dbReference type="SMR" id="P63718"/>
<dbReference type="PATRIC" id="fig|233413.5.peg.162"/>
<dbReference type="Proteomes" id="UP000001419">
    <property type="component" value="Chromosome"/>
</dbReference>
<dbReference type="GO" id="GO:0020037">
    <property type="term" value="F:heme binding"/>
    <property type="evidence" value="ECO:0007669"/>
    <property type="project" value="InterPro"/>
</dbReference>
<dbReference type="GO" id="GO:0005506">
    <property type="term" value="F:iron ion binding"/>
    <property type="evidence" value="ECO:0007669"/>
    <property type="project" value="InterPro"/>
</dbReference>
<dbReference type="GO" id="GO:0004497">
    <property type="term" value="F:monooxygenase activity"/>
    <property type="evidence" value="ECO:0007669"/>
    <property type="project" value="UniProtKB-KW"/>
</dbReference>
<dbReference type="GO" id="GO:0016705">
    <property type="term" value="F:oxidoreductase activity, acting on paired donors, with incorporation or reduction of molecular oxygen"/>
    <property type="evidence" value="ECO:0007669"/>
    <property type="project" value="InterPro"/>
</dbReference>
<dbReference type="CDD" id="cd11053">
    <property type="entry name" value="CYP110-like"/>
    <property type="match status" value="1"/>
</dbReference>
<dbReference type="Gene3D" id="1.10.630.10">
    <property type="entry name" value="Cytochrome P450"/>
    <property type="match status" value="1"/>
</dbReference>
<dbReference type="InterPro" id="IPR001128">
    <property type="entry name" value="Cyt_P450"/>
</dbReference>
<dbReference type="InterPro" id="IPR017972">
    <property type="entry name" value="Cyt_P450_CS"/>
</dbReference>
<dbReference type="InterPro" id="IPR002401">
    <property type="entry name" value="Cyt_P450_E_grp-I"/>
</dbReference>
<dbReference type="InterPro" id="IPR036396">
    <property type="entry name" value="Cyt_P450_sf"/>
</dbReference>
<dbReference type="InterPro" id="IPR050121">
    <property type="entry name" value="Cytochrome_P450_monoxygenase"/>
</dbReference>
<dbReference type="PANTHER" id="PTHR24305">
    <property type="entry name" value="CYTOCHROME P450"/>
    <property type="match status" value="1"/>
</dbReference>
<dbReference type="PANTHER" id="PTHR24305:SF166">
    <property type="entry name" value="CYTOCHROME P450 12A4, MITOCHONDRIAL-RELATED"/>
    <property type="match status" value="1"/>
</dbReference>
<dbReference type="Pfam" id="PF00067">
    <property type="entry name" value="p450"/>
    <property type="match status" value="1"/>
</dbReference>
<dbReference type="PRINTS" id="PR00463">
    <property type="entry name" value="EP450I"/>
</dbReference>
<dbReference type="PRINTS" id="PR00385">
    <property type="entry name" value="P450"/>
</dbReference>
<dbReference type="SUPFAM" id="SSF48264">
    <property type="entry name" value="Cytochrome P450"/>
    <property type="match status" value="1"/>
</dbReference>
<dbReference type="PROSITE" id="PS00086">
    <property type="entry name" value="CYTOCHROME_P450"/>
    <property type="match status" value="1"/>
</dbReference>
<accession>P63718</accession>
<accession>A0A1R3XV13</accession>
<accession>P96813</accession>
<accession>X2BE52</accession>
<sequence length="441" mass="49261">MSEVVTAAPAPPVVRLPPAVRGPKLFQGLAFVVSRRRLLGRFVRRYGKAFTANILMYGRVVVVADPQLARQVFTSSPEELGNIQPNLSRMFGSGSVFALDGDDHRRRRRLLAPPFHGKSMKNYETIIEEETLRETANWPQGQAFATLPSMMHITLNAILRAIFGAGGSELDELRRLIPPWVTLGSRLAALPKPKRDYGRLSPWGRLAEWRRQYDTVIDKLIEAERADPNFADRTDVLALMLRSTYDDGSIMSRKDIGDELLTLLAAGHETTAATLGWAFERLSRHPDVLAALVEEVDNGGHELRQAAILEVQRARTVIDFAARRVNPPVYQLGEWVIPRGYSIIINIAQIHGDPDVFPQPDRFDPQRYIGSKPSPFAWIPFGGGTRRCVGAAFANMEMDVVLRTVLRHFTLETTTAAGERSHGRGVAFTPKDGGRVVMRRR</sequence>
<proteinExistence type="inferred from homology"/>
<feature type="chain" id="PRO_0000052297" description="Putative cytochrome P450 138">
    <location>
        <begin position="1"/>
        <end position="441"/>
    </location>
</feature>
<feature type="binding site" description="axial binding residue" evidence="1">
    <location>
        <position position="388"/>
    </location>
    <ligand>
        <name>heme</name>
        <dbReference type="ChEBI" id="CHEBI:30413"/>
    </ligand>
    <ligandPart>
        <name>Fe</name>
        <dbReference type="ChEBI" id="CHEBI:18248"/>
    </ligandPart>
</feature>
<protein>
    <recommendedName>
        <fullName>Putative cytochrome P450 138</fullName>
        <ecNumber>1.14.-.-</ecNumber>
    </recommendedName>
</protein>
<gene>
    <name type="primary">cyp138</name>
    <name type="ordered locus">BQ2027_MB0141</name>
</gene>
<keyword id="KW-0349">Heme</keyword>
<keyword id="KW-0408">Iron</keyword>
<keyword id="KW-0479">Metal-binding</keyword>
<keyword id="KW-0503">Monooxygenase</keyword>
<keyword id="KW-0560">Oxidoreductase</keyword>
<keyword id="KW-1185">Reference proteome</keyword>
<evidence type="ECO:0000250" key="1"/>
<evidence type="ECO:0000305" key="2"/>
<reference key="1">
    <citation type="journal article" date="2003" name="Proc. Natl. Acad. Sci. U.S.A.">
        <title>The complete genome sequence of Mycobacterium bovis.</title>
        <authorList>
            <person name="Garnier T."/>
            <person name="Eiglmeier K."/>
            <person name="Camus J.-C."/>
            <person name="Medina N."/>
            <person name="Mansoor H."/>
            <person name="Pryor M."/>
            <person name="Duthoy S."/>
            <person name="Grondin S."/>
            <person name="Lacroix C."/>
            <person name="Monsempe C."/>
            <person name="Simon S."/>
            <person name="Harris B."/>
            <person name="Atkin R."/>
            <person name="Doggett J."/>
            <person name="Mayes R."/>
            <person name="Keating L."/>
            <person name="Wheeler P.R."/>
            <person name="Parkhill J."/>
            <person name="Barrell B.G."/>
            <person name="Cole S.T."/>
            <person name="Gordon S.V."/>
            <person name="Hewinson R.G."/>
        </authorList>
    </citation>
    <scope>NUCLEOTIDE SEQUENCE [LARGE SCALE GENOMIC DNA]</scope>
    <source>
        <strain>ATCC BAA-935 / AF2122/97</strain>
    </source>
</reference>
<reference key="2">
    <citation type="journal article" date="2017" name="Genome Announc.">
        <title>Updated reference genome sequence and annotation of Mycobacterium bovis AF2122/97.</title>
        <authorList>
            <person name="Malone K.M."/>
            <person name="Farrell D."/>
            <person name="Stuber T.P."/>
            <person name="Schubert O.T."/>
            <person name="Aebersold R."/>
            <person name="Robbe-Austerman S."/>
            <person name="Gordon S.V."/>
        </authorList>
    </citation>
    <scope>NUCLEOTIDE SEQUENCE [LARGE SCALE GENOMIC DNA]</scope>
    <scope>GENOME REANNOTATION</scope>
    <source>
        <strain>ATCC BAA-935 / AF2122/97</strain>
    </source>
</reference>
<comment type="cofactor">
    <cofactor evidence="1">
        <name>heme</name>
        <dbReference type="ChEBI" id="CHEBI:30413"/>
    </cofactor>
</comment>
<comment type="similarity">
    <text evidence="2">Belongs to the cytochrome P450 family.</text>
</comment>
<organism>
    <name type="scientific">Mycobacterium bovis (strain ATCC BAA-935 / AF2122/97)</name>
    <dbReference type="NCBI Taxonomy" id="233413"/>
    <lineage>
        <taxon>Bacteria</taxon>
        <taxon>Bacillati</taxon>
        <taxon>Actinomycetota</taxon>
        <taxon>Actinomycetes</taxon>
        <taxon>Mycobacteriales</taxon>
        <taxon>Mycobacteriaceae</taxon>
        <taxon>Mycobacterium</taxon>
        <taxon>Mycobacterium tuberculosis complex</taxon>
    </lineage>
</organism>
<name>CP138_MYCBO</name>